<name>SYD_XANCP</name>
<evidence type="ECO:0000255" key="1">
    <source>
        <dbReference type="HAMAP-Rule" id="MF_00044"/>
    </source>
</evidence>
<proteinExistence type="inferred from homology"/>
<protein>
    <recommendedName>
        <fullName evidence="1">Aspartate--tRNA ligase</fullName>
        <ecNumber evidence="1">6.1.1.12</ecNumber>
    </recommendedName>
    <alternativeName>
        <fullName evidence="1">Aspartyl-tRNA synthetase</fullName>
        <shortName evidence="1">AspRS</shortName>
    </alternativeName>
</protein>
<dbReference type="EC" id="6.1.1.12" evidence="1"/>
<dbReference type="EMBL" id="AE008922">
    <property type="protein sequence ID" value="AAM42301.1"/>
    <property type="molecule type" value="Genomic_DNA"/>
</dbReference>
<dbReference type="RefSeq" id="NP_638377.1">
    <property type="nucleotide sequence ID" value="NC_003902.1"/>
</dbReference>
<dbReference type="RefSeq" id="WP_011038145.1">
    <property type="nucleotide sequence ID" value="NC_003902.1"/>
</dbReference>
<dbReference type="SMR" id="Q8P6E0"/>
<dbReference type="STRING" id="190485.XCC3030"/>
<dbReference type="EnsemblBacteria" id="AAM42301">
    <property type="protein sequence ID" value="AAM42301"/>
    <property type="gene ID" value="XCC3030"/>
</dbReference>
<dbReference type="KEGG" id="xcc:XCC3030"/>
<dbReference type="PATRIC" id="fig|190485.4.peg.3232"/>
<dbReference type="eggNOG" id="COG0173">
    <property type="taxonomic scope" value="Bacteria"/>
</dbReference>
<dbReference type="HOGENOM" id="CLU_014330_3_2_6"/>
<dbReference type="OrthoDB" id="9802326at2"/>
<dbReference type="Proteomes" id="UP000001010">
    <property type="component" value="Chromosome"/>
</dbReference>
<dbReference type="GO" id="GO:0005737">
    <property type="term" value="C:cytoplasm"/>
    <property type="evidence" value="ECO:0007669"/>
    <property type="project" value="UniProtKB-SubCell"/>
</dbReference>
<dbReference type="GO" id="GO:0004815">
    <property type="term" value="F:aspartate-tRNA ligase activity"/>
    <property type="evidence" value="ECO:0000318"/>
    <property type="project" value="GO_Central"/>
</dbReference>
<dbReference type="GO" id="GO:0005524">
    <property type="term" value="F:ATP binding"/>
    <property type="evidence" value="ECO:0007669"/>
    <property type="project" value="UniProtKB-UniRule"/>
</dbReference>
<dbReference type="GO" id="GO:0003676">
    <property type="term" value="F:nucleic acid binding"/>
    <property type="evidence" value="ECO:0007669"/>
    <property type="project" value="InterPro"/>
</dbReference>
<dbReference type="GO" id="GO:0006422">
    <property type="term" value="P:aspartyl-tRNA aminoacylation"/>
    <property type="evidence" value="ECO:0000318"/>
    <property type="project" value="GO_Central"/>
</dbReference>
<dbReference type="CDD" id="cd00777">
    <property type="entry name" value="AspRS_core"/>
    <property type="match status" value="1"/>
</dbReference>
<dbReference type="CDD" id="cd04317">
    <property type="entry name" value="EcAspRS_like_N"/>
    <property type="match status" value="1"/>
</dbReference>
<dbReference type="Gene3D" id="3.30.930.10">
    <property type="entry name" value="Bira Bifunctional Protein, Domain 2"/>
    <property type="match status" value="1"/>
</dbReference>
<dbReference type="Gene3D" id="3.30.1360.30">
    <property type="entry name" value="GAD-like domain"/>
    <property type="match status" value="1"/>
</dbReference>
<dbReference type="Gene3D" id="2.40.50.140">
    <property type="entry name" value="Nucleic acid-binding proteins"/>
    <property type="match status" value="1"/>
</dbReference>
<dbReference type="HAMAP" id="MF_00044">
    <property type="entry name" value="Asp_tRNA_synth_type1"/>
    <property type="match status" value="1"/>
</dbReference>
<dbReference type="InterPro" id="IPR004364">
    <property type="entry name" value="Aa-tRNA-synt_II"/>
</dbReference>
<dbReference type="InterPro" id="IPR006195">
    <property type="entry name" value="aa-tRNA-synth_II"/>
</dbReference>
<dbReference type="InterPro" id="IPR045864">
    <property type="entry name" value="aa-tRNA-synth_II/BPL/LPL"/>
</dbReference>
<dbReference type="InterPro" id="IPR004524">
    <property type="entry name" value="Asp-tRNA-ligase_1"/>
</dbReference>
<dbReference type="InterPro" id="IPR047089">
    <property type="entry name" value="Asp-tRNA-ligase_1_N"/>
</dbReference>
<dbReference type="InterPro" id="IPR002312">
    <property type="entry name" value="Asp/Asn-tRNA-synth_IIb"/>
</dbReference>
<dbReference type="InterPro" id="IPR047090">
    <property type="entry name" value="AspRS_core"/>
</dbReference>
<dbReference type="InterPro" id="IPR004115">
    <property type="entry name" value="GAD-like_sf"/>
</dbReference>
<dbReference type="InterPro" id="IPR029351">
    <property type="entry name" value="GAD_dom"/>
</dbReference>
<dbReference type="InterPro" id="IPR012340">
    <property type="entry name" value="NA-bd_OB-fold"/>
</dbReference>
<dbReference type="InterPro" id="IPR004365">
    <property type="entry name" value="NA-bd_OB_tRNA"/>
</dbReference>
<dbReference type="NCBIfam" id="TIGR00459">
    <property type="entry name" value="aspS_bact"/>
    <property type="match status" value="1"/>
</dbReference>
<dbReference type="NCBIfam" id="NF001750">
    <property type="entry name" value="PRK00476.1"/>
    <property type="match status" value="1"/>
</dbReference>
<dbReference type="PANTHER" id="PTHR22594:SF5">
    <property type="entry name" value="ASPARTATE--TRNA LIGASE, MITOCHONDRIAL"/>
    <property type="match status" value="1"/>
</dbReference>
<dbReference type="PANTHER" id="PTHR22594">
    <property type="entry name" value="ASPARTYL/LYSYL-TRNA SYNTHETASE"/>
    <property type="match status" value="1"/>
</dbReference>
<dbReference type="Pfam" id="PF02938">
    <property type="entry name" value="GAD"/>
    <property type="match status" value="1"/>
</dbReference>
<dbReference type="Pfam" id="PF00152">
    <property type="entry name" value="tRNA-synt_2"/>
    <property type="match status" value="1"/>
</dbReference>
<dbReference type="Pfam" id="PF01336">
    <property type="entry name" value="tRNA_anti-codon"/>
    <property type="match status" value="1"/>
</dbReference>
<dbReference type="PRINTS" id="PR01042">
    <property type="entry name" value="TRNASYNTHASP"/>
</dbReference>
<dbReference type="SUPFAM" id="SSF55681">
    <property type="entry name" value="Class II aaRS and biotin synthetases"/>
    <property type="match status" value="1"/>
</dbReference>
<dbReference type="SUPFAM" id="SSF55261">
    <property type="entry name" value="GAD domain-like"/>
    <property type="match status" value="1"/>
</dbReference>
<dbReference type="SUPFAM" id="SSF50249">
    <property type="entry name" value="Nucleic acid-binding proteins"/>
    <property type="match status" value="1"/>
</dbReference>
<dbReference type="PROSITE" id="PS50862">
    <property type="entry name" value="AA_TRNA_LIGASE_II"/>
    <property type="match status" value="1"/>
</dbReference>
<accession>Q8P6E0</accession>
<gene>
    <name evidence="1" type="primary">aspS</name>
    <name type="ordered locus">XCC3030</name>
</gene>
<sequence>MRTHFCGLVDETLIGQTVTLAGWTDVARNLGGVCFIDLRDHEGIVQVTVEPAEGDANSAEVFKVAASLGYEDVLQVEGVVRARHAVNDKIRTGKVEVIATRITILNKAAPLPFHAHENPGEDTRLKYRYLDLRRPEMQRMQRTRIKLVQALRRHLDARDFQDIETPILTKATPEGARDFLVPARMHPGEFYALPQSPQLFKQILMVAGFDRYYQIARCFRDEALRADRQLEFTQLDMEFAFVRERDVQDFVEDMIRAIFKEVVDVELAAQFPRMTWAEAMRRYGSDKPDLRIALELVDVAELVKTSEFPVFAAAANDADGRVAALRIPGGATLSRKQIDDYAAHAAKYGAKGLAYSKLSETGEVSSPIAKFFGEEAFAALLAHVGAANGDIVFFGAGSYNKVSDFMGALRLKAGKDFGLVAAGWAPLWVTDFPMFEWDEEAQRYVALHHPFTAPAVDDIADLRANARTAVSRGYDMVLNGNEIGGGSIRIHRPDMQSAVFELLGIGAEEARAKFGFLLDALNYGAPPHGGIAFGIDRIAALMAGTESIRDVIPFPKTTGAQDLMTDAPSPIAAEQLAEVHVQVRPKQA</sequence>
<comment type="function">
    <text evidence="1">Catalyzes the attachment of L-aspartate to tRNA(Asp) in a two-step reaction: L-aspartate is first activated by ATP to form Asp-AMP and then transferred to the acceptor end of tRNA(Asp).</text>
</comment>
<comment type="catalytic activity">
    <reaction evidence="1">
        <text>tRNA(Asp) + L-aspartate + ATP = L-aspartyl-tRNA(Asp) + AMP + diphosphate</text>
        <dbReference type="Rhea" id="RHEA:19649"/>
        <dbReference type="Rhea" id="RHEA-COMP:9660"/>
        <dbReference type="Rhea" id="RHEA-COMP:9678"/>
        <dbReference type="ChEBI" id="CHEBI:29991"/>
        <dbReference type="ChEBI" id="CHEBI:30616"/>
        <dbReference type="ChEBI" id="CHEBI:33019"/>
        <dbReference type="ChEBI" id="CHEBI:78442"/>
        <dbReference type="ChEBI" id="CHEBI:78516"/>
        <dbReference type="ChEBI" id="CHEBI:456215"/>
        <dbReference type="EC" id="6.1.1.12"/>
    </reaction>
</comment>
<comment type="subunit">
    <text evidence="1">Homodimer.</text>
</comment>
<comment type="subcellular location">
    <subcellularLocation>
        <location evidence="1">Cytoplasm</location>
    </subcellularLocation>
</comment>
<comment type="similarity">
    <text evidence="1">Belongs to the class-II aminoacyl-tRNA synthetase family. Type 1 subfamily.</text>
</comment>
<organism>
    <name type="scientific">Xanthomonas campestris pv. campestris (strain ATCC 33913 / DSM 3586 / NCPPB 528 / LMG 568 / P 25)</name>
    <dbReference type="NCBI Taxonomy" id="190485"/>
    <lineage>
        <taxon>Bacteria</taxon>
        <taxon>Pseudomonadati</taxon>
        <taxon>Pseudomonadota</taxon>
        <taxon>Gammaproteobacteria</taxon>
        <taxon>Lysobacterales</taxon>
        <taxon>Lysobacteraceae</taxon>
        <taxon>Xanthomonas</taxon>
    </lineage>
</organism>
<feature type="chain" id="PRO_0000110983" description="Aspartate--tRNA ligase">
    <location>
        <begin position="1"/>
        <end position="588"/>
    </location>
</feature>
<feature type="region of interest" description="Aspartate" evidence="1">
    <location>
        <begin position="198"/>
        <end position="201"/>
    </location>
</feature>
<feature type="binding site" evidence="1">
    <location>
        <position position="174"/>
    </location>
    <ligand>
        <name>L-aspartate</name>
        <dbReference type="ChEBI" id="CHEBI:29991"/>
    </ligand>
</feature>
<feature type="binding site" evidence="1">
    <location>
        <begin position="220"/>
        <end position="222"/>
    </location>
    <ligand>
        <name>ATP</name>
        <dbReference type="ChEBI" id="CHEBI:30616"/>
    </ligand>
</feature>
<feature type="binding site" evidence="1">
    <location>
        <position position="220"/>
    </location>
    <ligand>
        <name>L-aspartate</name>
        <dbReference type="ChEBI" id="CHEBI:29991"/>
    </ligand>
</feature>
<feature type="binding site" evidence="1">
    <location>
        <position position="229"/>
    </location>
    <ligand>
        <name>ATP</name>
        <dbReference type="ChEBI" id="CHEBI:30616"/>
    </ligand>
</feature>
<feature type="binding site" evidence="1">
    <location>
        <position position="448"/>
    </location>
    <ligand>
        <name>L-aspartate</name>
        <dbReference type="ChEBI" id="CHEBI:29991"/>
    </ligand>
</feature>
<feature type="binding site" evidence="1">
    <location>
        <position position="482"/>
    </location>
    <ligand>
        <name>ATP</name>
        <dbReference type="ChEBI" id="CHEBI:30616"/>
    </ligand>
</feature>
<feature type="binding site" evidence="1">
    <location>
        <position position="489"/>
    </location>
    <ligand>
        <name>L-aspartate</name>
        <dbReference type="ChEBI" id="CHEBI:29991"/>
    </ligand>
</feature>
<feature type="binding site" evidence="1">
    <location>
        <begin position="534"/>
        <end position="537"/>
    </location>
    <ligand>
        <name>ATP</name>
        <dbReference type="ChEBI" id="CHEBI:30616"/>
    </ligand>
</feature>
<reference key="1">
    <citation type="journal article" date="2002" name="Nature">
        <title>Comparison of the genomes of two Xanthomonas pathogens with differing host specificities.</title>
        <authorList>
            <person name="da Silva A.C.R."/>
            <person name="Ferro J.A."/>
            <person name="Reinach F.C."/>
            <person name="Farah C.S."/>
            <person name="Furlan L.R."/>
            <person name="Quaggio R.B."/>
            <person name="Monteiro-Vitorello C.B."/>
            <person name="Van Sluys M.A."/>
            <person name="Almeida N.F. Jr."/>
            <person name="Alves L.M.C."/>
            <person name="do Amaral A.M."/>
            <person name="Bertolini M.C."/>
            <person name="Camargo L.E.A."/>
            <person name="Camarotte G."/>
            <person name="Cannavan F."/>
            <person name="Cardozo J."/>
            <person name="Chambergo F."/>
            <person name="Ciapina L.P."/>
            <person name="Cicarelli R.M.B."/>
            <person name="Coutinho L.L."/>
            <person name="Cursino-Santos J.R."/>
            <person name="El-Dorry H."/>
            <person name="Faria J.B."/>
            <person name="Ferreira A.J.S."/>
            <person name="Ferreira R.C.C."/>
            <person name="Ferro M.I.T."/>
            <person name="Formighieri E.F."/>
            <person name="Franco M.C."/>
            <person name="Greggio C.C."/>
            <person name="Gruber A."/>
            <person name="Katsuyama A.M."/>
            <person name="Kishi L.T."/>
            <person name="Leite R.P."/>
            <person name="Lemos E.G.M."/>
            <person name="Lemos M.V.F."/>
            <person name="Locali E.C."/>
            <person name="Machado M.A."/>
            <person name="Madeira A.M.B.N."/>
            <person name="Martinez-Rossi N.M."/>
            <person name="Martins E.C."/>
            <person name="Meidanis J."/>
            <person name="Menck C.F.M."/>
            <person name="Miyaki C.Y."/>
            <person name="Moon D.H."/>
            <person name="Moreira L.M."/>
            <person name="Novo M.T.M."/>
            <person name="Okura V.K."/>
            <person name="Oliveira M.C."/>
            <person name="Oliveira V.R."/>
            <person name="Pereira H.A."/>
            <person name="Rossi A."/>
            <person name="Sena J.A.D."/>
            <person name="Silva C."/>
            <person name="de Souza R.F."/>
            <person name="Spinola L.A.F."/>
            <person name="Takita M.A."/>
            <person name="Tamura R.E."/>
            <person name="Teixeira E.C."/>
            <person name="Tezza R.I.D."/>
            <person name="Trindade dos Santos M."/>
            <person name="Truffi D."/>
            <person name="Tsai S.M."/>
            <person name="White F.F."/>
            <person name="Setubal J.C."/>
            <person name="Kitajima J.P."/>
        </authorList>
    </citation>
    <scope>NUCLEOTIDE SEQUENCE [LARGE SCALE GENOMIC DNA]</scope>
    <source>
        <strain>ATCC 33913 / DSM 3586 / NCPPB 528 / LMG 568 / P 25</strain>
    </source>
</reference>
<keyword id="KW-0030">Aminoacyl-tRNA synthetase</keyword>
<keyword id="KW-0067">ATP-binding</keyword>
<keyword id="KW-0963">Cytoplasm</keyword>
<keyword id="KW-0436">Ligase</keyword>
<keyword id="KW-0547">Nucleotide-binding</keyword>
<keyword id="KW-0648">Protein biosynthesis</keyword>
<keyword id="KW-1185">Reference proteome</keyword>